<accession>P02899</accession>
<keyword id="KW-0419">Kinetoplast</keyword>
<keyword id="KW-0496">Mitochondrion</keyword>
<protein>
    <recommendedName>
        <fullName>Uncharacterized kinetoplast minicircle 51 polypeptide</fullName>
    </recommendedName>
</protein>
<proteinExistence type="predicted"/>
<name>YKM2_TRYBB</name>
<feature type="chain" id="PRO_0000196904" description="Uncharacterized kinetoplast minicircle 51 polypeptide">
    <location>
        <begin position="1"/>
        <end position="71"/>
    </location>
</feature>
<sequence length="71" mass="8286">MGVQKYTYTNPVLFWGIFEVRGTSKGVGVILTRFFWVFSGRERVLKRSSYIVILNLWLLRGFLEASDYSES</sequence>
<dbReference type="EMBL" id="V01389">
    <property type="protein sequence ID" value="CAA24679.1"/>
    <property type="molecule type" value="Genomic_DNA"/>
</dbReference>
<dbReference type="PIR" id="A03396">
    <property type="entry name" value="MKUT5B"/>
</dbReference>
<dbReference type="GO" id="GO:0020023">
    <property type="term" value="C:kinetoplast"/>
    <property type="evidence" value="ECO:0007669"/>
    <property type="project" value="UniProtKB-SubCell"/>
</dbReference>
<dbReference type="InterPro" id="IPR007429">
    <property type="entry name" value="DUF478"/>
</dbReference>
<dbReference type="Pfam" id="PF04334">
    <property type="entry name" value="DUF478"/>
    <property type="match status" value="1"/>
</dbReference>
<geneLocation type="mitochondrion"/>
<organism>
    <name type="scientific">Trypanosoma brucei brucei</name>
    <dbReference type="NCBI Taxonomy" id="5702"/>
    <lineage>
        <taxon>Eukaryota</taxon>
        <taxon>Discoba</taxon>
        <taxon>Euglenozoa</taxon>
        <taxon>Kinetoplastea</taxon>
        <taxon>Metakinetoplastina</taxon>
        <taxon>Trypanosomatida</taxon>
        <taxon>Trypanosomatidae</taxon>
        <taxon>Trypanosoma</taxon>
    </lineage>
</organism>
<comment type="subcellular location">
    <subcellularLocation>
        <location>Mitochondrion matrix</location>
        <location>Kinetoplast</location>
    </subcellularLocation>
</comment>
<reference key="1">
    <citation type="journal article" date="1980" name="Proc. Natl. Acad. Sci. U.S.A.">
        <title>Sequences of two kinetoplast DNA minicircles of Tryptanosoma brucei.</title>
        <authorList>
            <person name="Chen K.K."/>
            <person name="Donelson J.E."/>
        </authorList>
    </citation>
    <scope>NUCLEOTIDE SEQUENCE [GENOMIC DNA] (0.98-KB KINETOPLAST)</scope>
</reference>